<comment type="function">
    <text evidence="2">Iodination and coupling of the hormonogenic tyrosines in thyroglobulin to yield the thyroid hormones T(3) and T(4).</text>
</comment>
<comment type="catalytic activity">
    <reaction evidence="2">
        <text>2 iodide + H2O2 + 2 H(+) = diiodine + 2 H2O</text>
        <dbReference type="Rhea" id="RHEA:23336"/>
        <dbReference type="ChEBI" id="CHEBI:15377"/>
        <dbReference type="ChEBI" id="CHEBI:15378"/>
        <dbReference type="ChEBI" id="CHEBI:16240"/>
        <dbReference type="ChEBI" id="CHEBI:16382"/>
        <dbReference type="ChEBI" id="CHEBI:17606"/>
        <dbReference type="EC" id="1.11.1.8"/>
    </reaction>
</comment>
<comment type="catalytic activity">
    <reaction evidence="2">
        <text>[thyroglobulin]-L-tyrosine + iodide + H2O2 + H(+) = [thyroglobulin]-3-iodo-L-tyrosine + 2 H2O</text>
        <dbReference type="Rhea" id="RHEA:48956"/>
        <dbReference type="Rhea" id="RHEA-COMP:12274"/>
        <dbReference type="Rhea" id="RHEA-COMP:12275"/>
        <dbReference type="ChEBI" id="CHEBI:15377"/>
        <dbReference type="ChEBI" id="CHEBI:15378"/>
        <dbReference type="ChEBI" id="CHEBI:16240"/>
        <dbReference type="ChEBI" id="CHEBI:16382"/>
        <dbReference type="ChEBI" id="CHEBI:46858"/>
        <dbReference type="ChEBI" id="CHEBI:90870"/>
        <dbReference type="EC" id="1.11.1.8"/>
    </reaction>
</comment>
<comment type="catalytic activity">
    <reaction evidence="2">
        <text>[thyroglobulin]-3-iodo-L-tyrosine + iodide + H2O2 + H(+) = [thyroglobulin]-3,5-diiodo-L-tyrosine + 2 H2O</text>
        <dbReference type="Rhea" id="RHEA:48960"/>
        <dbReference type="Rhea" id="RHEA-COMP:12275"/>
        <dbReference type="Rhea" id="RHEA-COMP:12276"/>
        <dbReference type="ChEBI" id="CHEBI:15377"/>
        <dbReference type="ChEBI" id="CHEBI:15378"/>
        <dbReference type="ChEBI" id="CHEBI:16240"/>
        <dbReference type="ChEBI" id="CHEBI:16382"/>
        <dbReference type="ChEBI" id="CHEBI:90870"/>
        <dbReference type="ChEBI" id="CHEBI:90871"/>
        <dbReference type="EC" id="1.11.1.8"/>
    </reaction>
</comment>
<comment type="catalytic activity">
    <reaction evidence="2">
        <text>2 [thyroglobulin]-3,5-diiodo-L-tyrosine + H2O2 = [thyroglobulin]-L-thyroxine + [thyroglobulin]-dehydroalanine + 2 H2O</text>
        <dbReference type="Rhea" id="RHEA:48964"/>
        <dbReference type="Rhea" id="RHEA-COMP:12276"/>
        <dbReference type="Rhea" id="RHEA-COMP:12277"/>
        <dbReference type="Rhea" id="RHEA-COMP:12278"/>
        <dbReference type="ChEBI" id="CHEBI:15377"/>
        <dbReference type="ChEBI" id="CHEBI:16240"/>
        <dbReference type="ChEBI" id="CHEBI:90871"/>
        <dbReference type="ChEBI" id="CHEBI:90872"/>
        <dbReference type="ChEBI" id="CHEBI:90873"/>
        <dbReference type="EC" id="1.11.1.8"/>
    </reaction>
</comment>
<comment type="catalytic activity">
    <reaction evidence="2">
        <text>[thyroglobulin]-3-iodo-L-tyrosine + [thyroglobulin]-3,5-diiodo-L-tyrosine + H2O2 = [thyroglobulin]-3,3',5-triiodo-L-thyronine + [thyroglobulin]-dehydroalanine + 2 H2O</text>
        <dbReference type="Rhea" id="RHEA:48968"/>
        <dbReference type="Rhea" id="RHEA-COMP:12275"/>
        <dbReference type="Rhea" id="RHEA-COMP:12276"/>
        <dbReference type="Rhea" id="RHEA-COMP:12278"/>
        <dbReference type="Rhea" id="RHEA-COMP:12279"/>
        <dbReference type="ChEBI" id="CHEBI:15377"/>
        <dbReference type="ChEBI" id="CHEBI:16240"/>
        <dbReference type="ChEBI" id="CHEBI:90870"/>
        <dbReference type="ChEBI" id="CHEBI:90871"/>
        <dbReference type="ChEBI" id="CHEBI:90873"/>
        <dbReference type="ChEBI" id="CHEBI:90874"/>
        <dbReference type="EC" id="1.11.1.8"/>
    </reaction>
</comment>
<comment type="cofactor">
    <cofactor evidence="5">
        <name>Ca(2+)</name>
        <dbReference type="ChEBI" id="CHEBI:29108"/>
    </cofactor>
    <text evidence="5">Binds 1 Ca(2+) ion per heterodimer.</text>
</comment>
<comment type="cofactor">
    <cofactor evidence="5">
        <name>heme b</name>
        <dbReference type="ChEBI" id="CHEBI:60344"/>
    </cofactor>
    <text evidence="5">Binds 1 heme b (iron(II)-protoporphyrin IX) group covalently per heterodimer.</text>
</comment>
<comment type="pathway">
    <text>Hormone biosynthesis; thyroid hormone biosynthesis.</text>
</comment>
<comment type="subunit">
    <text evidence="20">Interacts with DUOX1, DUOX2 and CYBA.</text>
</comment>
<comment type="subcellular location">
    <subcellularLocation>
        <location>Membrane</location>
        <topology>Single-pass type I membrane protein</topology>
    </subcellularLocation>
</comment>
<comment type="subcellular location">
    <molecule>Isoform 3</molecule>
    <subcellularLocation>
        <location>Cell surface</location>
    </subcellularLocation>
</comment>
<comment type="alternative products">
    <event type="alternative splicing"/>
    <isoform>
        <id>P07202-1</id>
        <name>1</name>
        <name>TPO1</name>
        <sequence type="displayed"/>
    </isoform>
    <isoform>
        <id>P07202-2</id>
        <name>2</name>
        <name>TPO2</name>
        <sequence type="described" ref="VSP_004665"/>
    </isoform>
    <isoform>
        <id>P07202-3</id>
        <name>3</name>
        <name>TPO3</name>
        <name>Graves' disease</name>
        <name>TPOzaninelli</name>
        <sequence type="described" ref="VSP_004666"/>
    </isoform>
    <isoform>
        <id>P07202-4</id>
        <name>4</name>
        <name>TPO4</name>
        <sequence type="described" ref="VSP_007269"/>
    </isoform>
    <isoform>
        <id>P07202-5</id>
        <name>5</name>
        <name>TPO5</name>
        <sequence type="described" ref="VSP_007268"/>
    </isoform>
    <isoform>
        <id>P07202-6</id>
        <name>6</name>
        <name>TPO6</name>
        <sequence type="described" ref="VSP_004665 VSP_007270"/>
    </isoform>
    <isoform>
        <id>P07202-7</id>
        <name>2-3</name>
        <sequence type="described" ref="VSP_004665 VSP_004666"/>
    </isoform>
    <isoform>
        <id>P07202-8</id>
        <name>2-4</name>
        <sequence type="described" ref="VSP_004665 VSP_007269"/>
    </isoform>
    <text>Additional isoforms seem to exist.</text>
</comment>
<comment type="PTM">
    <text>Glycosylated.</text>
</comment>
<comment type="PTM">
    <text>Heme is covalently bound through a H(2)O(2)-dependent autocatalytic process. Heme insertion is important for the delivery of protein at the cell surface.</text>
</comment>
<comment type="PTM">
    <text>Cleaved in its N-terminal part.</text>
</comment>
<comment type="disease">
    <text>An alternative splicing in the thyroperoxidase mRNA can cause Graves' disease.</text>
</comment>
<comment type="disease" evidence="8 9 10 11 12 13 14 16 17 18 19 21 22 23 26 27 28">
    <disease id="DI-00360">
        <name>Thyroid dyshormonogenesis 2A</name>
        <acronym>TDH2A</acronym>
        <description>A disorder due to defective conversion of accumulated iodide to organically bound iodine. The iodide organification defect can be partial or complete.</description>
        <dbReference type="MIM" id="274500"/>
    </disease>
    <text>The disease is caused by variants affecting the gene represented in this entry.</text>
</comment>
<comment type="miscellaneous">
    <molecule>Isoform 2</molecule>
    <text evidence="35">Lacks exon 10. Found in normal thyroid tissues as well as Graves'tissues. Rapidly degraded after synthesis, does not reach the cell surface. Inactive.</text>
</comment>
<comment type="miscellaneous">
    <molecule>Isoform 3</molecule>
    <text evidence="35">Lacks exon 16. Found in normal thyroid tissues as well as Graves'tissues. Active.</text>
</comment>
<comment type="miscellaneous">
    <molecule>Isoform 4</molecule>
    <text evidence="35">Lacks exon 14. Active.</text>
</comment>
<comment type="miscellaneous">
    <molecule>Isoform 5</molecule>
    <text evidence="35">Lacks exon 8. Does not fold correctly. Does not reach the cell surface.</text>
</comment>
<comment type="miscellaneous">
    <molecule>Isoform 6</molecule>
    <text evidence="35">Lacks exons 10, 12, 13, 14 and 16.</text>
</comment>
<comment type="miscellaneous">
    <molecule>Isoform 2-3</molecule>
    <text evidence="35">Lacks exons 10 and 16.</text>
</comment>
<comment type="miscellaneous">
    <molecule>Isoform 2-4</molecule>
    <text evidence="35">Lacks exons 10 and 14.</text>
</comment>
<comment type="similarity">
    <text evidence="5">Belongs to the peroxidase family. XPO subfamily.</text>
</comment>
<comment type="online information" name="Wikipedia">
    <link uri="https://en.wikipedia.org/wiki/Thyroid_peroxidase"/>
    <text>Thyroid peroxidase entry</text>
</comment>
<feature type="signal peptide" evidence="3">
    <location>
        <begin position="1"/>
        <end position="18"/>
    </location>
</feature>
<feature type="chain" id="PRO_0000023662" description="Thyroid peroxidase">
    <location>
        <begin position="19"/>
        <end position="933"/>
    </location>
</feature>
<feature type="topological domain" description="Extracellular" evidence="3">
    <location>
        <begin position="19"/>
        <end position="846"/>
    </location>
</feature>
<feature type="transmembrane region" description="Helical" evidence="3">
    <location>
        <begin position="847"/>
        <end position="871"/>
    </location>
</feature>
<feature type="topological domain" description="Cytoplasmic" evidence="3">
    <location>
        <begin position="872"/>
        <end position="933"/>
    </location>
</feature>
<feature type="domain" description="Sushi" evidence="6">
    <location>
        <begin position="740"/>
        <end position="795"/>
    </location>
</feature>
<feature type="domain" description="EGF-like; calcium-binding" evidence="4">
    <location>
        <begin position="796"/>
        <end position="839"/>
    </location>
</feature>
<feature type="region of interest" description="Disordered" evidence="7">
    <location>
        <begin position="881"/>
        <end position="933"/>
    </location>
</feature>
<feature type="compositionally biased region" description="Basic and acidic residues" evidence="7">
    <location>
        <begin position="922"/>
        <end position="933"/>
    </location>
</feature>
<feature type="active site" description="Proton acceptor" evidence="5">
    <location>
        <position position="239"/>
    </location>
</feature>
<feature type="binding site" description="covalent" evidence="1">
    <location>
        <position position="238"/>
    </location>
    <ligand>
        <name>heme b</name>
        <dbReference type="ChEBI" id="CHEBI:60344"/>
    </ligand>
</feature>
<feature type="binding site" evidence="5">
    <location>
        <position position="240"/>
    </location>
    <ligand>
        <name>Ca(2+)</name>
        <dbReference type="ChEBI" id="CHEBI:29108"/>
    </ligand>
</feature>
<feature type="binding site" evidence="5">
    <location>
        <position position="321"/>
    </location>
    <ligand>
        <name>Ca(2+)</name>
        <dbReference type="ChEBI" id="CHEBI:29108"/>
    </ligand>
</feature>
<feature type="binding site" evidence="5">
    <location>
        <position position="323"/>
    </location>
    <ligand>
        <name>Ca(2+)</name>
        <dbReference type="ChEBI" id="CHEBI:29108"/>
    </ligand>
</feature>
<feature type="binding site" evidence="5">
    <location>
        <position position="325"/>
    </location>
    <ligand>
        <name>Ca(2+)</name>
        <dbReference type="ChEBI" id="CHEBI:29108"/>
    </ligand>
</feature>
<feature type="binding site" evidence="5">
    <location>
        <position position="327"/>
    </location>
    <ligand>
        <name>Ca(2+)</name>
        <dbReference type="ChEBI" id="CHEBI:29108"/>
    </ligand>
</feature>
<feature type="binding site" description="covalent" evidence="1">
    <location>
        <position position="399"/>
    </location>
    <ligand>
        <name>heme b</name>
        <dbReference type="ChEBI" id="CHEBI:60344"/>
    </ligand>
</feature>
<feature type="binding site" description="axial binding residue" evidence="5">
    <location>
        <position position="494"/>
    </location>
    <ligand>
        <name>heme b</name>
        <dbReference type="ChEBI" id="CHEBI:60344"/>
    </ligand>
    <ligandPart>
        <name>Fe</name>
        <dbReference type="ChEBI" id="CHEBI:18248"/>
    </ligandPart>
</feature>
<feature type="site" description="Transition state stabilizer" evidence="5">
    <location>
        <position position="396"/>
    </location>
</feature>
<feature type="glycosylation site" description="N-linked (GlcNAc...) asparagine" evidence="3">
    <location>
        <position position="129"/>
    </location>
</feature>
<feature type="glycosylation site" description="N-linked (GlcNAc...) asparagine" evidence="3">
    <location>
        <position position="307"/>
    </location>
</feature>
<feature type="glycosylation site" description="N-linked (GlcNAc...) asparagine" evidence="3">
    <location>
        <position position="342"/>
    </location>
</feature>
<feature type="glycosylation site" description="N-linked (GlcNAc...) asparagine" evidence="3">
    <location>
        <position position="569"/>
    </location>
</feature>
<feature type="disulfide bond" evidence="1">
    <location>
        <begin position="142"/>
        <end position="158"/>
    </location>
</feature>
<feature type="disulfide bond" evidence="1">
    <location>
        <begin position="259"/>
        <end position="269"/>
    </location>
</feature>
<feature type="disulfide bond" evidence="1">
    <location>
        <begin position="263"/>
        <end position="286"/>
    </location>
</feature>
<feature type="disulfide bond" evidence="1">
    <location>
        <begin position="598"/>
        <end position="655"/>
    </location>
</feature>
<feature type="disulfide bond" evidence="1">
    <location>
        <begin position="696"/>
        <end position="721"/>
    </location>
</feature>
<feature type="disulfide bond" evidence="1">
    <location>
        <begin position="800"/>
        <end position="814"/>
    </location>
</feature>
<feature type="disulfide bond" evidence="1">
    <location>
        <begin position="808"/>
        <end position="823"/>
    </location>
</feature>
<feature type="disulfide bond" evidence="1">
    <location>
        <begin position="825"/>
        <end position="838"/>
    </location>
</feature>
<feature type="splice variant" id="VSP_007268" description="In isoform 5." evidence="34">
    <location>
        <begin position="274"/>
        <end position="446"/>
    </location>
</feature>
<feature type="splice variant" id="VSP_004665" description="In isoform 2, isoform 2-3, isoform 2-4 and isoform 6." evidence="31 33">
    <location>
        <begin position="534"/>
        <end position="590"/>
    </location>
</feature>
<feature type="splice variant" id="VSP_007270" description="In isoform 6." evidence="35">
    <location>
        <begin position="669"/>
        <end position="933"/>
    </location>
</feature>
<feature type="splice variant" id="VSP_007269" description="In isoform 4 and isoform 2-4." evidence="35">
    <location>
        <begin position="796"/>
        <end position="839"/>
    </location>
</feature>
<feature type="splice variant" id="VSP_004666" description="In isoform 3 and isoform 2-3." evidence="32">
    <original>TRTGTKSTLPISETGGGTPELRCGKHQAVGTSPQRAAAQDSEQESAGMEGRDTHRLPRAL</original>
    <variation>RVLGWKAGILTGCREPSEGKVAGHCRTASCSQNHRTTLFQTQANRKSAGRLFSQHG</variation>
    <location>
        <begin position="874"/>
        <end position="933"/>
    </location>
</feature>
<feature type="sequence variant" id="VAR_021622" description="In TDH2A." evidence="14">
    <original>A</original>
    <variation>P</variation>
    <location>
        <position position="53"/>
    </location>
</feature>
<feature type="sequence variant" id="VAR_021623" description="In TDH2A; loss of activity; dbSNP:rs1427024341." evidence="28">
    <original>D</original>
    <variation>N</variation>
    <location>
        <position position="240"/>
    </location>
</feature>
<feature type="sequence variant" id="VAR_006057" description="In dbSNP:rs4927611." evidence="26 29 30">
    <original>A</original>
    <variation>S</variation>
    <location>
        <position position="257"/>
    </location>
</feature>
<feature type="sequence variant" id="VAR_021624" description="In TDH2A." evidence="19">
    <original>N</original>
    <variation>T</variation>
    <location>
        <position position="307"/>
    </location>
</feature>
<feature type="sequence variant" id="VAR_021625" description="In TDH2A; dbSNP:rs371367459." evidence="10">
    <original>A</original>
    <variation>T</variation>
    <location>
        <position position="326"/>
    </location>
</feature>
<feature type="sequence variant" id="VAR_006058" description="In dbSNP:rs2280132." evidence="26">
    <original>A</original>
    <variation>S</variation>
    <location>
        <position position="373"/>
    </location>
</feature>
<feature type="sequence variant" id="VAR_025784" description="In TDH2A; dbSNP:rs1297312788." evidence="21">
    <original>E</original>
    <variation>K</variation>
    <location>
        <position position="378"/>
    </location>
</feature>
<feature type="sequence variant" id="VAR_006059" description="In dbSNP:rs2175977." evidence="26">
    <original>S</original>
    <variation>T</variation>
    <location>
        <position position="398"/>
    </location>
</feature>
<feature type="sequence variant" id="VAR_078336" description="In TDH2A; uncertain significance; dbSNP:rs1173922703." evidence="23">
    <original>R</original>
    <variation>H</variation>
    <location>
        <position position="412"/>
    </location>
</feature>
<feature type="sequence variant" id="VAR_021626" description="In TDH2A; dbSNP:rs1035791118." evidence="19">
    <original>V</original>
    <variation>M</variation>
    <location>
        <position position="433"/>
    </location>
</feature>
<feature type="sequence variant" id="VAR_015375" description="In TDH2A; dbSNP:rs104893669." evidence="10 27">
    <original>I</original>
    <variation>F</variation>
    <location>
        <position position="447"/>
    </location>
</feature>
<feature type="sequence variant" id="VAR_006060" description="In TDH2A; dbSNP:rs121908083." evidence="10 22 26">
    <original>Y</original>
    <variation>D</variation>
    <location>
        <position position="453"/>
    </location>
</feature>
<feature type="sequence variant" id="VAR_021627" description="In TDH2A; dbSNP:rs1231870370." evidence="11">
    <original>L</original>
    <variation>P</variation>
    <location>
        <position position="458"/>
    </location>
</feature>
<feature type="sequence variant" id="VAR_021628" description="In TDH2A; dbSNP:rs201165648." evidence="11">
    <original>R</original>
    <variation>H</variation>
    <location>
        <position position="491"/>
    </location>
</feature>
<feature type="sequence variant" id="VAR_021629" description="In TDH2A; dbSNP:rs778515113." evidence="12">
    <original>G</original>
    <variation>S</variation>
    <location>
        <position position="493"/>
    </location>
</feature>
<feature type="sequence variant" id="VAR_021630" description="In TDH2A; dbSNP:rs1169072188." evidence="19">
    <original>P</original>
    <variation>L</variation>
    <location>
        <position position="499"/>
    </location>
</feature>
<feature type="sequence variant" id="VAR_021631" description="In TDH2A; dbSNP:rs779434941." evidence="10">
    <original>W</original>
    <variation>C</variation>
    <location>
        <position position="527"/>
    </location>
</feature>
<feature type="sequence variant" id="VAR_027229" description="In TDH2A; partial defect; expression slightly lower in efficiency and more degenerative than wild-type enzyme." evidence="18">
    <original>G</original>
    <variation>C</variation>
    <location>
        <position position="533"/>
    </location>
</feature>
<feature type="sequence variant" id="VAR_027230" description="In TDH2A; partial defect; expressed on the plasma membrane surface at less than half the rate of wild-type enzyme.">
    <location>
        <begin position="574"/>
        <end position="575"/>
    </location>
</feature>
<feature type="sequence variant" id="VAR_027231" description="In TDH2A; dbSNP:rs121908084." evidence="26">
    <original>G</original>
    <variation>S</variation>
    <location>
        <position position="590"/>
    </location>
</feature>
<feature type="sequence variant" id="VAR_078337" description="In TDH2A; uncertain significance." evidence="23">
    <location>
        <begin position="596"/>
        <end position="933"/>
    </location>
</feature>
<feature type="sequence variant" id="VAR_027232" description="In dbSNP:rs10189135.">
    <original>V</original>
    <variation>M</variation>
    <location>
        <position position="618"/>
    </location>
</feature>
<feature type="sequence variant" id="VAR_013138" description="In TDH2A; dbSNP:rs121908086." evidence="8">
    <original>R</original>
    <variation>Q</variation>
    <location>
        <position position="648"/>
    </location>
</feature>
<feature type="sequence variant" id="VAR_021632" description="In TDH2A; dbSNP:rs121908088." evidence="9">
    <original>Q</original>
    <variation>E</variation>
    <location>
        <position position="660"/>
    </location>
</feature>
<feature type="sequence variant" id="VAR_021633" description="In TDH2A; fails to localize to the plasma membrane; dbSNP:rs776742629." evidence="13">
    <original>R</original>
    <variation>W</variation>
    <location>
        <position position="665"/>
    </location>
</feature>
<feature type="sequence variant" id="VAR_021634" description="In TDH2A; dbSNP:rs121908087." evidence="10 17">
    <original>R</original>
    <variation>W</variation>
    <location>
        <position position="693"/>
    </location>
</feature>
<feature type="sequence variant" id="VAR_027233" description="In dbSNP:rs13431173.">
    <original>M</original>
    <variation>V</variation>
    <location>
        <position position="706"/>
    </location>
</feature>
<feature type="sequence variant" id="VAR_006061" description="In dbSNP:rs732609." evidence="15 24 25 26 30">
    <original>T</original>
    <variation>P</variation>
    <location>
        <position position="725"/>
    </location>
</feature>
<feature type="sequence variant" id="VAR_021635" description="In TDH2A; fails to localize to the plasma membrane; dbSNP:rs138931129." evidence="13">
    <original>G</original>
    <variation>R</variation>
    <location>
        <position position="771"/>
    </location>
</feature>
<feature type="sequence variant" id="VAR_027234" description="In dbSNP:rs28991293.">
    <original>L</original>
    <variation>P</variation>
    <location>
        <position position="793"/>
    </location>
</feature>
<feature type="sequence variant" id="VAR_021636" description="In TDH2A." evidence="12">
    <original>D</original>
    <variation>Y</variation>
    <location>
        <position position="796"/>
    </location>
</feature>
<feature type="sequence variant" id="VAR_006062" description="In TDH2A; dbSNP:rs121908085." evidence="8 10 26">
    <original>E</original>
    <variation>K</variation>
    <location>
        <position position="799"/>
    </location>
</feature>
<feature type="sequence variant" id="VAR_021637" description="In TDH2A; dbSNP:rs935058009." evidence="19">
    <original>C</original>
    <variation>R</variation>
    <location>
        <position position="808"/>
    </location>
</feature>
<feature type="sequence variant" id="VAR_027235" description="In TDH2A; dbSNP:rs146351101." evidence="16">
    <original>V</original>
    <variation>I</variation>
    <location>
        <position position="839"/>
    </location>
</feature>
<feature type="sequence variant" id="VAR_027236" description="In dbSNP:rs28913014.">
    <original>R</original>
    <variation>W</variation>
    <location>
        <position position="846"/>
    </location>
</feature>
<feature type="sequence variant" id="VAR_027237" description="In dbSNP:rs1126799." evidence="15 24 25 30">
    <original>V</original>
    <variation>A</variation>
    <location>
        <position position="847"/>
    </location>
</feature>
<feature type="sequence conflict" description="In Ref. 5; AAA61217." evidence="35" ref="5">
    <original>P</original>
    <variation>G</variation>
    <location>
        <position position="70"/>
    </location>
</feature>
<feature type="sequence conflict" description="In Ref. 5 and 8." evidence="35" ref="5 8">
    <original>A</original>
    <variation>G</variation>
    <location>
        <position position="354"/>
    </location>
</feature>
<feature type="sequence conflict" description="In Ref. 1; AAA61215/AAA61216." evidence="35" ref="1">
    <original>A</original>
    <variation>R</variation>
    <location>
        <position position="371"/>
    </location>
</feature>
<feature type="sequence conflict" description="In Ref. 5 and 8." evidence="35" ref="5 8">
    <original>I</original>
    <variation>N</variation>
    <location>
        <position position="381"/>
    </location>
</feature>
<feature type="sequence conflict" description="In Ref. 2; CAA68467." evidence="35" ref="2">
    <original>D</original>
    <variation>N</variation>
    <location>
        <position position="574"/>
    </location>
</feature>
<feature type="sequence conflict" description="In Ref. 7; AAN11302." evidence="35" ref="7">
    <original>W</original>
    <variation>C</variation>
    <location>
        <position position="732"/>
    </location>
</feature>
<feature type="sequence conflict" description="In Ref. 2 and 7." evidence="35" ref="2 7">
    <original>V</original>
    <variation>M</variation>
    <location>
        <position position="748"/>
    </location>
</feature>
<feature type="sequence conflict" description="In Ref. 6; AAL74416." evidence="35" ref="6">
    <original>N</original>
    <variation>S</variation>
    <location>
        <position position="816"/>
    </location>
</feature>
<feature type="sequence conflict" description="In Ref. 2 and 7." evidence="35" ref="2 7">
    <original>R</original>
    <variation>K</variation>
    <location>
        <position position="872"/>
    </location>
</feature>
<proteinExistence type="evidence at protein level"/>
<sequence length="933" mass="102963">MRALAVLSVTLVMACTEAFFPFISRGKELLWGKPEESRVSSVLEESKRLVDTAMYATMQRNLKKRGILSPAQLLSFSKLPEPTSGVIARAAEIMETSIQAMKRKVNLKTQQSQHPTDALSEDLLSIIANMSGCLPYMLPPKCPNTCLANKYRPITGACNNRDHPRWGASNTALARWLPPVYEDGFSQPRGWNPGFLYNGFPLPPVREVTRHVIQVSNEVVTDDDRYSDLLMAWGQYIDHDIAFTPQSTSKAAFGGGADCQMTCENQNPCFPIQLPEEARPAAGTACLPFYRSSAACGTGDQGALFGNLSTANPRQQMNGLTSFLDASTVYGSSPALERQLRNWTSAEGLLRVHARLRDSGRAYLPFVPPRAPAACAPEPGIPGETRGPCFLAGDGRASEVPSLTALHTLWLREHNRLAAALKALNAHWSADAVYQEARKVVGALHQIITLRDYIPRILGPEAFQQYVGPYEGYDSTANPTVSNVFSTAAFRFGHATIHPLVRRLDASFQEHPDLPGLWLHQAFFSPWTLLRGGGLDPLIRGLLARPAKLQVQDQLMNEELTERLFVLSNSSTLDLASINLQRGRDHGLPGYNEWREFCGLPRLETPADLSTAIASRSVADKILDLYKHPDNIDVWLGGLAENFLPRARTGPLFACLIGKQMKALRDGDWFWWENSHVFTDAQRRELEKHSLSRVICDNTGLTRVPMDAFQVGKFPEDFESCDSITGMNLEAWRETFPQDDKCGFPESVENGDFVHCEESGRRVLVYSCRHGYELQGREQLTCTQEGWDFQPPLCKDVNECADGAHPPCHASARCRNTKGGFQCLCADPYELGDDGRTCVDSGRLPRVTWISMSLAALLIGGFAGLTSTVICRWTRTGTKSTLPISETGGGTPELRCGKHQAVGTSPQRAAAQDSEQESAGMEGRDTHRLPRAL</sequence>
<evidence type="ECO:0000250" key="1"/>
<evidence type="ECO:0000250" key="2">
    <source>
        <dbReference type="UniProtKB" id="P09933"/>
    </source>
</evidence>
<evidence type="ECO:0000255" key="3"/>
<evidence type="ECO:0000255" key="4">
    <source>
        <dbReference type="PROSITE-ProRule" id="PRU00076"/>
    </source>
</evidence>
<evidence type="ECO:0000255" key="5">
    <source>
        <dbReference type="PROSITE-ProRule" id="PRU00298"/>
    </source>
</evidence>
<evidence type="ECO:0000255" key="6">
    <source>
        <dbReference type="PROSITE-ProRule" id="PRU00302"/>
    </source>
</evidence>
<evidence type="ECO:0000256" key="7">
    <source>
        <dbReference type="SAM" id="MobiDB-lite"/>
    </source>
</evidence>
<evidence type="ECO:0000269" key="8">
    <source>
    </source>
</evidence>
<evidence type="ECO:0000269" key="9">
    <source>
    </source>
</evidence>
<evidence type="ECO:0000269" key="10">
    <source>
    </source>
</evidence>
<evidence type="ECO:0000269" key="11">
    <source>
    </source>
</evidence>
<evidence type="ECO:0000269" key="12">
    <source>
    </source>
</evidence>
<evidence type="ECO:0000269" key="13">
    <source>
    </source>
</evidence>
<evidence type="ECO:0000269" key="14">
    <source>
    </source>
</evidence>
<evidence type="ECO:0000269" key="15">
    <source>
    </source>
</evidence>
<evidence type="ECO:0000269" key="16">
    <source>
    </source>
</evidence>
<evidence type="ECO:0000269" key="17">
    <source>
    </source>
</evidence>
<evidence type="ECO:0000269" key="18">
    <source>
    </source>
</evidence>
<evidence type="ECO:0000269" key="19">
    <source>
    </source>
</evidence>
<evidence type="ECO:0000269" key="20">
    <source>
    </source>
</evidence>
<evidence type="ECO:0000269" key="21">
    <source>
    </source>
</evidence>
<evidence type="ECO:0000269" key="22">
    <source>
    </source>
</evidence>
<evidence type="ECO:0000269" key="23">
    <source>
    </source>
</evidence>
<evidence type="ECO:0000269" key="24">
    <source>
    </source>
</evidence>
<evidence type="ECO:0000269" key="25">
    <source>
    </source>
</evidence>
<evidence type="ECO:0000269" key="26">
    <source>
    </source>
</evidence>
<evidence type="ECO:0000269" key="27">
    <source>
    </source>
</evidence>
<evidence type="ECO:0000269" key="28">
    <source>
    </source>
</evidence>
<evidence type="ECO:0000269" key="29">
    <source ref="5"/>
</evidence>
<evidence type="ECO:0000269" key="30">
    <source ref="6"/>
</evidence>
<evidence type="ECO:0000303" key="31">
    <source>
    </source>
</evidence>
<evidence type="ECO:0000303" key="32">
    <source>
    </source>
</evidence>
<evidence type="ECO:0000303" key="33">
    <source>
    </source>
</evidence>
<evidence type="ECO:0000303" key="34">
    <source ref="6"/>
</evidence>
<evidence type="ECO:0000305" key="35"/>
<evidence type="ECO:0000312" key="36">
    <source>
        <dbReference type="HGNC" id="HGNC:12015"/>
    </source>
</evidence>
<accession>P07202</accession>
<accession>P09934</accession>
<accession>P09935</accession>
<accession>Q8IUL0</accession>
<accession>Q8NF94</accession>
<accession>Q8NF95</accession>
<accession>Q8NF96</accession>
<accession>Q8NF97</accession>
<accession>Q8TCI9</accession>
<gene>
    <name evidence="36" type="primary">TPO</name>
</gene>
<reference key="1">
    <citation type="journal article" date="1987" name="Proc. Natl. Acad. Sci. U.S.A.">
        <title>Human thyroid peroxidase: complete cDNA and protein sequence, chromosome mapping, and identification of two alternately spliced mRNAs.</title>
        <authorList>
            <person name="Kimura S."/>
            <person name="Kotani T."/>
            <person name="McBride O.W."/>
            <person name="Umeki K."/>
            <person name="Hirai K."/>
            <person name="Nakayama T."/>
            <person name="Ohtaki S."/>
        </authorList>
    </citation>
    <scope>NUCLEOTIDE SEQUENCE [MRNA] (ISOFORMS 1 AND 2)</scope>
    <scope>VARIANTS PRO-725 AND ALA-847</scope>
</reference>
<reference key="2">
    <citation type="journal article" date="1987" name="Nucleic Acids Res.">
        <title>Complete nucleotide sequence of the human thyroperoxidase-microsomal antigen cDNA.</title>
        <authorList>
            <person name="Libert F."/>
            <person name="Ruel J."/>
            <person name="Ludgate M."/>
            <person name="Swillens S."/>
            <person name="Alexander N."/>
            <person name="Vassart G."/>
            <person name="Dinsart C."/>
        </authorList>
    </citation>
    <scope>NUCLEOTIDE SEQUENCE [MRNA] (ISOFORM 1)</scope>
    <scope>VARIANTS PRO-725 AND ALA-847</scope>
    <source>
        <tissue>Thyroid</tissue>
    </source>
</reference>
<reference key="3">
    <citation type="journal article" date="1989" name="Biochemistry">
        <title>Structure of the human thyroid peroxidase gene: comparison and relationship to the human myeloperoxidase gene.</title>
        <authorList>
            <person name="Kimura S."/>
            <person name="Hong Y.S."/>
            <person name="Kotani T."/>
            <person name="Ohtaki S."/>
            <person name="Kikkawa F."/>
        </authorList>
    </citation>
    <scope>NUCLEOTIDE SEQUENCE [GENOMIC DNA] (ISOFORM 1)</scope>
</reference>
<reference key="4">
    <citation type="journal article" date="1990" name="Nucleic Acids Res.">
        <title>Nucleotide sequence of the alternatively spliced human thyroid peroxidase cDNA, TPO-2.</title>
        <authorList>
            <person name="Barnett P.S."/>
            <person name="Banga J.P."/>
            <person name="Watkins J."/>
            <person name="Huang G.C."/>
            <person name="Gluckman D.R.B."/>
            <person name="Page M.J."/>
            <person name="McGregor A.M."/>
        </authorList>
    </citation>
    <scope>NUCLEOTIDE SEQUENCE [MRNA] (ISOFORM 2)</scope>
    <source>
        <tissue>Thyroid</tissue>
    </source>
</reference>
<reference key="5">
    <citation type="submission" date="1999-04" db="EMBL/GenBank/DDBJ databases">
        <authorList>
            <person name="Rapoport B."/>
        </authorList>
    </citation>
    <scope>NUCLEOTIDE SEQUENCE [MRNA] (ISOFORM 1)</scope>
    <scope>VARIANT SER-257</scope>
    <source>
        <tissue>Thyroid</tissue>
    </source>
</reference>
<reference key="6">
    <citation type="submission" date="2002-01" db="EMBL/GenBank/DDBJ databases">
        <title>Homo sapiens thyroid peroxidase (TPO) variant mRNA, alternatively spliced sequence.</title>
        <authorList>
            <person name="Hennen G.P."/>
            <person name="Igout A."/>
            <person name="Melen L.B."/>
        </authorList>
    </citation>
    <scope>NUCLEOTIDE SEQUENCE [MRNA] (ISOFORM 5)</scope>
    <scope>VARIANTS SER-257; PRO-725 AND ALA-847</scope>
    <source>
        <tissue>Thyroid</tissue>
    </source>
</reference>
<reference key="7">
    <citation type="journal article" date="2003" name="J. Biol. Chem.">
        <title>Increasing diversity of human thyroperoxidase generated by alternative splicing. Characterization by molecular cloning of new transcripts with single- and multispliced mRNAs.</title>
        <authorList>
            <person name="Ferrand M."/>
            <person name="Le Fourn V."/>
            <person name="Franc J.-L."/>
        </authorList>
    </citation>
    <scope>PARTIAL NUCLEOTIDE SEQUENCE [MRNA] (ISOFORMS 4; 5; 6; 2-3 AND 2-4)</scope>
    <scope>VARIANTS PRO-725 AND ALA-847</scope>
    <source>
        <tissue>Thyroid</tissue>
    </source>
</reference>
<reference key="8">
    <citation type="journal article" date="1987" name="J. Clin. Invest.">
        <title>Isolation of a complementary DNA clone for thyroid microsomal antigen. Homology with the gene for thyroid peroxidase.</title>
        <authorList>
            <person name="Seto P."/>
            <person name="Hirayu H."/>
            <person name="Magnusson R.P."/>
            <person name="Gestautas J."/>
            <person name="Portmann L."/>
            <person name="Degroot L.J."/>
            <person name="Rapoport B."/>
        </authorList>
    </citation>
    <scope>NUCLEOTIDE SEQUENCE [MRNA] OF 217-496</scope>
</reference>
<reference key="9">
    <citation type="journal article" date="1990" name="Biochem. Biophys. Res. Commun.">
        <title>Evidence for an alternate splicing in the thyroperoxidase messenger from patients with Graves' disease.</title>
        <authorList>
            <person name="Zanelli E."/>
            <person name="Henry M."/>
            <person name="Charvet B."/>
            <person name="Malthiery Y."/>
        </authorList>
    </citation>
    <scope>NUCLEOTIDE SEQUENCE [MRNA] OF 670-933 (ISOFORM 3)</scope>
    <scope>ALTERNATIVE SPLICING IN GRAVES' DISEASE</scope>
    <source>
        <tissue>Thyroid</tissue>
    </source>
</reference>
<reference key="10">
    <citation type="journal article" date="2005" name="J. Biol. Chem.">
        <title>Identification of a novel partner of duox: EFP1, a thioredoxin-related protein.</title>
        <authorList>
            <person name="Wang D."/>
            <person name="De Deken X."/>
            <person name="Milenkovic M."/>
            <person name="Song Y."/>
            <person name="Pirson I."/>
            <person name="Dumont J.E."/>
            <person name="Miot F."/>
        </authorList>
    </citation>
    <scope>INTERACTION WITH DUOX1; DUOX2 AND CYBA</scope>
</reference>
<reference key="11">
    <citation type="journal article" date="1995" name="Hum. Mutat.">
        <title>Identification of five novel inactivating mutations in the human thyroid peroxidase gene by denaturing gradient gel electrophoresis.</title>
        <authorList>
            <person name="Bikker H."/>
            <person name="Vulsma T."/>
            <person name="Baas F."/>
            <person name="de Vijlder J.J.M."/>
        </authorList>
    </citation>
    <scope>VARIANTS TDH2A ASP-453; SER-590 AND LYS-799</scope>
    <scope>VARIANTS SER-257; SER-373; THR-398 AND PRO-725</scope>
</reference>
<reference key="12">
    <citation type="journal article" date="1997" name="J. Clin. Endocrinol. Metab.">
        <title>Molecular analysis of mutated thyroid peroxidase detected in patients with total iodide organification defects.</title>
        <authorList>
            <person name="Bikker H."/>
            <person name="Baas F."/>
            <person name="De Vijlder J.J.M."/>
        </authorList>
    </citation>
    <scope>VARIANT TDH2A PHE-447</scope>
</reference>
<reference key="13">
    <citation type="journal article" date="1999" name="Clin. Endocrinol. (Oxf.)">
        <title>A novel mutation in the TPO gene in goitrous hypothyroid patients with iodide organification defect.</title>
        <authorList>
            <person name="Santos C.L.S."/>
            <person name="Bikker H."/>
            <person name="Rego K.G.M."/>
            <person name="Nascimento A.C."/>
            <person name="Tambascia M."/>
            <person name="De Vijlder J.J.M."/>
            <person name="Medeiros-Neto G."/>
        </authorList>
    </citation>
    <scope>VARIANT TDH2A GLU-660</scope>
</reference>
<reference key="14">
    <citation type="journal article" date="1999" name="J. Clin. Endocrinol. Metab.">
        <title>Two different mutations in the thyroid peroxidase gene of a large inbred Amish kindred: power and limits of homozygosity mapping.</title>
        <authorList>
            <person name="Pannain S."/>
            <person name="Weiss R.E."/>
            <person name="Jackson C.E."/>
            <person name="Dian D."/>
            <person name="Beck J.C."/>
            <person name="Sheffield V.C."/>
            <person name="Cox N."/>
            <person name="Refetoff S."/>
        </authorList>
    </citation>
    <scope>VARIANTS TDH2A GLN-648 AND LYS-799</scope>
</reference>
<reference key="15">
    <citation type="journal article" date="1999" name="J. Endocrinol.">
        <title>A novel mutation in the human thyroid peroxidase gene resulting in a total iodide organification defect.</title>
        <authorList>
            <person name="Kotani T."/>
            <person name="Umeki K."/>
            <person name="Yamamoto I."/>
            <person name="Maesaka H."/>
            <person name="Tachibana K."/>
            <person name="Ohtaki S."/>
        </authorList>
    </citation>
    <scope>VARIANT TDH2A ASN-240</scope>
    <scope>CHARACTERIZATION OF VARIANT TDH2A ASN-240</scope>
</reference>
<reference key="16">
    <citation type="journal article" date="2000" name="J. Clin. Endocrinol. Metab.">
        <title>Two decades of screening for congenital hypothyroidism in The Netherlands: TPO gene mutations in total iodide organification defects (an update).</title>
        <authorList>
            <person name="Bakker B."/>
            <person name="Bikker H."/>
            <person name="Vulsma T."/>
            <person name="de Randamie J.S.E."/>
            <person name="Wiedijk B.M."/>
            <person name="De Vijlder J.J.M."/>
        </authorList>
    </citation>
    <scope>VARIANTS TDH2A THR-326; PHE-447; ASP-453; CYS-527; TRP-693 AND LYS-799</scope>
</reference>
<reference key="17">
    <citation type="journal article" date="2001" name="Eur. J. Endocrinol.">
        <title>Novel mutations of the thyroid peroxidase gene in patients with permanent congenital hypothyroidism.</title>
        <authorList>
            <person name="Ambrugger P."/>
            <person name="Stoeva I."/>
            <person name="Biebermann H."/>
            <person name="Torresani T."/>
            <person name="Leitner C."/>
            <person name="Grueters A."/>
        </authorList>
    </citation>
    <scope>VARIANTS TDH2A PRO-458 AND HIS-491</scope>
</reference>
<reference key="18">
    <citation type="journal article" date="2002" name="Eur. J. Endocrinol.">
        <title>Two novel missense mutations in the thyroid peroxidase gene, R665W and G771R, result in a localization defect and cause congenital hypothyroidism.</title>
        <authorList>
            <person name="Umeki K."/>
            <person name="Kotani T."/>
            <person name="Kawano J."/>
            <person name="Suganuma T."/>
            <person name="Yamamoto I."/>
            <person name="Aratake Y."/>
            <person name="Furujo M."/>
            <person name="Ichiba Y."/>
        </authorList>
    </citation>
    <scope>VARIANTS TDH2A TRP-665 AND ARG-771</scope>
    <scope>CHARACTERIZATION OF VARIANTS TDH2A TRP-665 AND ARG-771</scope>
</reference>
<reference key="19">
    <citation type="journal article" date="2002" name="J. Clin. Endocrinol. Metab.">
        <title>High prevalence of a novel mutation (2268 insT) of the thyroid peroxidase gene in Taiwanese patients with total iodide organification defect, and evidence for a founder effect.</title>
        <authorList>
            <person name="Niu D.-M."/>
            <person name="Hwang B."/>
            <person name="Chu Y.-K."/>
            <person name="Liao C.-J."/>
            <person name="Wang P.-L."/>
            <person name="Lin C.-Y."/>
        </authorList>
    </citation>
    <scope>VARIANT TDH2A PRO-53</scope>
</reference>
<reference key="20">
    <citation type="journal article" date="2002" name="J. Endocrinol.">
        <title>Mutation analysis of thyroid peroxidase gene in Chinese patients with total iodide organification defect: identification of five novel mutations.</title>
        <authorList>
            <person name="Wu J.-Y."/>
            <person name="Shu S.-G."/>
            <person name="Yang C.-F."/>
            <person name="Lee C.-C."/>
            <person name="Tsai F.-J."/>
        </authorList>
    </citation>
    <scope>VARIANTS TDH2A SER-493 AND TYR-796</scope>
</reference>
<reference key="21">
    <citation type="journal article" date="2002" name="Thyroid">
        <title>Genetics of specific phenotypes of congenital hypothyroidism: a population-based approach.</title>
        <authorList>
            <person name="Calaciura F."/>
            <person name="Miscio G."/>
            <person name="Coco A."/>
            <person name="Leonardi D."/>
            <person name="Cisternino C."/>
            <person name="Regalbuto C."/>
            <person name="Bozzali M."/>
            <person name="Maiorana R."/>
            <person name="Ranieri A."/>
            <person name="Carta A."/>
            <person name="Buscema M."/>
            <person name="Trischitta V."/>
            <person name="Sava L."/>
            <person name="Tassi V."/>
        </authorList>
    </citation>
    <scope>VARIANT TDH2A ILE-839</scope>
</reference>
<reference key="22">
    <citation type="journal article" date="2003" name="Clin. Endocrinol. (Oxf.)">
        <title>Partial iodide organification defect caused by a novel mutation of the thyroid peroxidase gene in three siblings.</title>
        <authorList>
            <person name="Kotani T."/>
            <person name="Umeki K."/>
            <person name="Kawano J."/>
            <person name="Suganuma T."/>
            <person name="Hishinuma A."/>
            <person name="Ieiri T."/>
            <person name="Harada S."/>
        </authorList>
    </citation>
    <scope>VARIANTS TDH2A CYS-533 AND 574-ASP-LEU-575 DEL</scope>
    <scope>CHARACTERIZATION OF VARIANTS TDH2A CYS-533 AND 574-ASP-LEU-575 DEL</scope>
</reference>
<reference key="23">
    <citation type="journal article" date="2003" name="Hum. Mutat.">
        <title>Five novel inactivating mutations in the thyroid peroxidase gene responsible for congenital goiter and iodide organification defect.</title>
        <authorList>
            <person name="Rivolta C.M."/>
            <person name="Esperante S.A."/>
            <person name="Gruneiro-Papendieck L."/>
            <person name="Chiesa A."/>
            <person name="Moya C.M."/>
            <person name="Domene S."/>
            <person name="Varela V."/>
            <person name="Targovnik H.M."/>
        </authorList>
    </citation>
    <scope>VARIANTS TDH2A THR-307; MET-433; LEU-499 AND ARG-808</scope>
</reference>
<reference key="24">
    <citation type="journal article" date="2003" name="J. Clin. Endocrinol. Metab.">
        <title>Monoallelic expression of mutant thyroid peroxidase allele causing total iodide organification defect.</title>
        <authorList>
            <person name="Fugazzola L."/>
            <person name="Cerutti N."/>
            <person name="Mannavola D."/>
            <person name="Vannucchi G."/>
            <person name="Fallini C."/>
            <person name="Persani L."/>
            <person name="Beck-Peccoz P."/>
        </authorList>
    </citation>
    <scope>VARIANT TDH2A TRP-693</scope>
</reference>
<reference key="25">
    <citation type="journal article" date="2005" name="Endocr. J.">
        <title>Two novel mutations in the thyroid peroxidase gene with goitrous hypothyroidism.</title>
        <authorList>
            <person name="Tajima T."/>
            <person name="Tsubaki J."/>
            <person name="Fujieda K."/>
        </authorList>
    </citation>
    <scope>VARIANT TDH2A LYS-378</scope>
</reference>
<reference key="26">
    <citation type="journal article" date="2006" name="J. Clin. Endocrinol. Metab.">
        <title>Goitrous congenital hypothyroidism and hearing impairment associated with mutations in the TPO and SLC26A4/PDS genes.</title>
        <authorList>
            <person name="Pfarr N."/>
            <person name="Borck G."/>
            <person name="Turk A."/>
            <person name="Napiontek U."/>
            <person name="Keilmann A."/>
            <person name="Mueller-Forell W."/>
            <person name="Kopp P."/>
            <person name="Pohlenz J."/>
        </authorList>
    </citation>
    <scope>VARIANT TDH2A ASP-453</scope>
</reference>
<reference key="27">
    <citation type="journal article" date="2016" name="J. Hum. Genet.">
        <title>Mutations in the genes for thyroglobulin and thyroid peroxidase cause thyroid dyshormonogenesis and autosomal-recessive intellectual disability.</title>
        <authorList>
            <person name="Mittal K."/>
            <person name="Rafiq M.A."/>
            <person name="Rafiullah R."/>
            <person name="Harripaul R."/>
            <person name="Ali H."/>
            <person name="Ayaz M."/>
            <person name="Aslam M."/>
            <person name="Naeem F."/>
            <person name="Amin-Ud-Din M."/>
            <person name="Waqas A."/>
            <person name="So J."/>
            <person name="Rappold G.A."/>
            <person name="Vincent J.B."/>
            <person name="Ayub M."/>
        </authorList>
    </citation>
    <scope>VARIANTS TDH2A HIS-412 AND 596-GLU--LEU-933 DEL</scope>
</reference>
<name>PERT_HUMAN</name>
<organism>
    <name type="scientific">Homo sapiens</name>
    <name type="common">Human</name>
    <dbReference type="NCBI Taxonomy" id="9606"/>
    <lineage>
        <taxon>Eukaryota</taxon>
        <taxon>Metazoa</taxon>
        <taxon>Chordata</taxon>
        <taxon>Craniata</taxon>
        <taxon>Vertebrata</taxon>
        <taxon>Euteleostomi</taxon>
        <taxon>Mammalia</taxon>
        <taxon>Eutheria</taxon>
        <taxon>Euarchontoglires</taxon>
        <taxon>Primates</taxon>
        <taxon>Haplorrhini</taxon>
        <taxon>Catarrhini</taxon>
        <taxon>Hominidae</taxon>
        <taxon>Homo</taxon>
    </lineage>
</organism>
<dbReference type="EC" id="1.11.1.8" evidence="2"/>
<dbReference type="EMBL" id="J02969">
    <property type="protein sequence ID" value="AAA61215.1"/>
    <property type="molecule type" value="mRNA"/>
</dbReference>
<dbReference type="EMBL" id="J02970">
    <property type="protein sequence ID" value="AAA61216.1"/>
    <property type="molecule type" value="mRNA"/>
</dbReference>
<dbReference type="EMBL" id="Y00406">
    <property type="protein sequence ID" value="CAA68467.1"/>
    <property type="molecule type" value="mRNA"/>
</dbReference>
<dbReference type="EMBL" id="M25715">
    <property type="protein sequence ID" value="AAA97517.1"/>
    <property type="molecule type" value="Genomic_DNA"/>
</dbReference>
<dbReference type="EMBL" id="M25702">
    <property type="protein sequence ID" value="AAA97517.1"/>
    <property type="status" value="JOINED"/>
    <property type="molecule type" value="Genomic_DNA"/>
</dbReference>
<dbReference type="EMBL" id="M25703">
    <property type="protein sequence ID" value="AAA97517.1"/>
    <property type="status" value="JOINED"/>
    <property type="molecule type" value="Genomic_DNA"/>
</dbReference>
<dbReference type="EMBL" id="M25704">
    <property type="protein sequence ID" value="AAA97517.1"/>
    <property type="status" value="JOINED"/>
    <property type="molecule type" value="Genomic_DNA"/>
</dbReference>
<dbReference type="EMBL" id="M25705">
    <property type="protein sequence ID" value="AAA97517.1"/>
    <property type="status" value="JOINED"/>
    <property type="molecule type" value="Genomic_DNA"/>
</dbReference>
<dbReference type="EMBL" id="M25706">
    <property type="protein sequence ID" value="AAA97517.1"/>
    <property type="status" value="JOINED"/>
    <property type="molecule type" value="Genomic_DNA"/>
</dbReference>
<dbReference type="EMBL" id="M25707">
    <property type="protein sequence ID" value="AAA97517.1"/>
    <property type="status" value="JOINED"/>
    <property type="molecule type" value="Genomic_DNA"/>
</dbReference>
<dbReference type="EMBL" id="M25708">
    <property type="protein sequence ID" value="AAA97517.1"/>
    <property type="status" value="JOINED"/>
    <property type="molecule type" value="Genomic_DNA"/>
</dbReference>
<dbReference type="EMBL" id="M25709">
    <property type="protein sequence ID" value="AAA97517.1"/>
    <property type="status" value="JOINED"/>
    <property type="molecule type" value="Genomic_DNA"/>
</dbReference>
<dbReference type="EMBL" id="M25710">
    <property type="protein sequence ID" value="AAA97517.1"/>
    <property type="status" value="JOINED"/>
    <property type="molecule type" value="Genomic_DNA"/>
</dbReference>
<dbReference type="EMBL" id="M25711">
    <property type="protein sequence ID" value="AAA97517.1"/>
    <property type="status" value="JOINED"/>
    <property type="molecule type" value="Genomic_DNA"/>
</dbReference>
<dbReference type="EMBL" id="M25712">
    <property type="protein sequence ID" value="AAA97517.1"/>
    <property type="status" value="JOINED"/>
    <property type="molecule type" value="Genomic_DNA"/>
</dbReference>
<dbReference type="EMBL" id="M25713">
    <property type="protein sequence ID" value="AAA97517.1"/>
    <property type="status" value="JOINED"/>
    <property type="molecule type" value="Genomic_DNA"/>
</dbReference>
<dbReference type="EMBL" id="M25714">
    <property type="protein sequence ID" value="AAA97517.1"/>
    <property type="status" value="JOINED"/>
    <property type="molecule type" value="Genomic_DNA"/>
</dbReference>
<dbReference type="EMBL" id="X17358">
    <property type="protein sequence ID" value="CAA35235.1"/>
    <property type="molecule type" value="mRNA"/>
</dbReference>
<dbReference type="EMBL" id="M17755">
    <property type="protein sequence ID" value="AAA61217.2"/>
    <property type="molecule type" value="mRNA"/>
</dbReference>
<dbReference type="EMBL" id="AF439430">
    <property type="protein sequence ID" value="AAL74416.1"/>
    <property type="molecule type" value="mRNA"/>
</dbReference>
<dbReference type="EMBL" id="AF533528">
    <property type="protein sequence ID" value="AAN04471.1"/>
    <property type="molecule type" value="mRNA"/>
</dbReference>
<dbReference type="EMBL" id="AY136822">
    <property type="protein sequence ID" value="AAN11302.1"/>
    <property type="molecule type" value="mRNA"/>
</dbReference>
<dbReference type="EMBL" id="AF533529">
    <property type="protein sequence ID" value="AAN04472.1"/>
    <property type="molecule type" value="mRNA"/>
</dbReference>
<dbReference type="EMBL" id="AF533530">
    <property type="protein sequence ID" value="AAN04473.1"/>
    <property type="molecule type" value="mRNA"/>
</dbReference>
<dbReference type="EMBL" id="AF533531">
    <property type="protein sequence ID" value="AAN04474.1"/>
    <property type="molecule type" value="mRNA"/>
</dbReference>
<dbReference type="EMBL" id="M55702">
    <property type="protein sequence ID" value="AAA61219.1"/>
    <property type="molecule type" value="mRNA"/>
</dbReference>
<dbReference type="EMBL" id="M55702">
    <property type="protein sequence ID" value="AAA61218.1"/>
    <property type="molecule type" value="mRNA"/>
</dbReference>
<dbReference type="CCDS" id="CCDS1643.1">
    <molecule id="P07202-1"/>
</dbReference>
<dbReference type="CCDS" id="CCDS1644.1">
    <molecule id="P07202-2"/>
</dbReference>
<dbReference type="CCDS" id="CCDS1646.1">
    <molecule id="P07202-5"/>
</dbReference>
<dbReference type="PIR" id="A32413">
    <property type="entry name" value="OPHUIT"/>
</dbReference>
<dbReference type="RefSeq" id="NP_000538.3">
    <molecule id="P07202-1"/>
    <property type="nucleotide sequence ID" value="NM_000547.5"/>
</dbReference>
<dbReference type="RefSeq" id="NP_001193673.1">
    <molecule id="P07202-1"/>
    <property type="nucleotide sequence ID" value="NM_001206744.2"/>
</dbReference>
<dbReference type="RefSeq" id="NP_001193674.1">
    <molecule id="P07202-2"/>
    <property type="nucleotide sequence ID" value="NM_001206745.2"/>
</dbReference>
<dbReference type="RefSeq" id="NP_783650.1">
    <molecule id="P07202-2"/>
    <property type="nucleotide sequence ID" value="NM_175719.4"/>
</dbReference>
<dbReference type="RefSeq" id="NP_783652.1">
    <molecule id="P07202-4"/>
    <property type="nucleotide sequence ID" value="NM_175721.3"/>
</dbReference>
<dbReference type="RefSeq" id="NP_783653.1">
    <molecule id="P07202-5"/>
    <property type="nucleotide sequence ID" value="NM_175722.3"/>
</dbReference>
<dbReference type="RefSeq" id="XP_011508683.1">
    <property type="nucleotide sequence ID" value="XM_011510381.2"/>
</dbReference>
<dbReference type="SMR" id="P07202"/>
<dbReference type="BioGRID" id="113026">
    <property type="interactions" value="6"/>
</dbReference>
<dbReference type="CORUM" id="P07202"/>
<dbReference type="FunCoup" id="P07202">
    <property type="interactions" value="73"/>
</dbReference>
<dbReference type="STRING" id="9606.ENSP00000329869"/>
<dbReference type="BindingDB" id="P07202"/>
<dbReference type="ChEMBL" id="CHEMBL1839"/>
<dbReference type="DrugBank" id="DB11496">
    <property type="generic name" value="2-mercaptobenzothiazole"/>
</dbReference>
<dbReference type="DrugBank" id="DB00389">
    <property type="generic name" value="Carbimazole"/>
</dbReference>
<dbReference type="DrugBank" id="DB00509">
    <property type="generic name" value="Dextrothyroxine"/>
</dbReference>
<dbReference type="DrugBank" id="DB05382">
    <property type="generic name" value="Iodine"/>
</dbReference>
<dbReference type="DrugBank" id="DB00763">
    <property type="generic name" value="Methimazole"/>
</dbReference>
<dbReference type="DrugBank" id="DB00550">
    <property type="generic name" value="Propylthiouracil"/>
</dbReference>
<dbReference type="DrugBank" id="DB11085">
    <property type="generic name" value="Resorcinol"/>
</dbReference>
<dbReference type="DrugBank" id="DB08604">
    <property type="generic name" value="Triclosan"/>
</dbReference>
<dbReference type="DrugCentral" id="P07202"/>
<dbReference type="GuidetoPHARMACOLOGY" id="2526"/>
<dbReference type="Allergome" id="9554">
    <property type="allergen name" value="Hom s TPO"/>
</dbReference>
<dbReference type="PeroxiBase" id="3318">
    <property type="entry name" value="HsTPO01"/>
</dbReference>
<dbReference type="GlyCosmos" id="P07202">
    <property type="glycosylation" value="4 sites, No reported glycans"/>
</dbReference>
<dbReference type="GlyGen" id="P07202">
    <property type="glycosylation" value="7 sites, 1 O-linked glycan (1 site)"/>
</dbReference>
<dbReference type="iPTMnet" id="P07202"/>
<dbReference type="PhosphoSitePlus" id="P07202"/>
<dbReference type="BioMuta" id="TPO"/>
<dbReference type="DMDM" id="160281455"/>
<dbReference type="MassIVE" id="P07202"/>
<dbReference type="PaxDb" id="9606-ENSP00000318820"/>
<dbReference type="PeptideAtlas" id="P07202"/>
<dbReference type="ProteomicsDB" id="51964">
    <molecule id="P07202-1"/>
</dbReference>
<dbReference type="ProteomicsDB" id="51965">
    <molecule id="P07202-2"/>
</dbReference>
<dbReference type="ProteomicsDB" id="51966">
    <molecule id="P07202-3"/>
</dbReference>
<dbReference type="ProteomicsDB" id="51967">
    <molecule id="P07202-4"/>
</dbReference>
<dbReference type="ProteomicsDB" id="51968">
    <molecule id="P07202-5"/>
</dbReference>
<dbReference type="ProteomicsDB" id="51969">
    <molecule id="P07202-6"/>
</dbReference>
<dbReference type="ProteomicsDB" id="51970">
    <molecule id="P07202-7"/>
</dbReference>
<dbReference type="ProteomicsDB" id="51971">
    <molecule id="P07202-8"/>
</dbReference>
<dbReference type="ABCD" id="P07202">
    <property type="antibodies" value="56 sequenced antibodies"/>
</dbReference>
<dbReference type="Antibodypedia" id="2364">
    <property type="antibodies" value="685 antibodies from 34 providers"/>
</dbReference>
<dbReference type="DNASU" id="7173"/>
<dbReference type="Ensembl" id="ENST00000329066.9">
    <molecule id="P07202-1"/>
    <property type="protein sequence ID" value="ENSP00000329869.4"/>
    <property type="gene ID" value="ENSG00000115705.22"/>
</dbReference>
<dbReference type="Ensembl" id="ENST00000345913.8">
    <molecule id="P07202-1"/>
    <property type="protein sequence ID" value="ENSP00000318820.7"/>
    <property type="gene ID" value="ENSG00000115705.22"/>
</dbReference>
<dbReference type="Ensembl" id="ENST00000346956.7">
    <molecule id="P07202-4"/>
    <property type="protein sequence ID" value="ENSP00000263886.6"/>
    <property type="gene ID" value="ENSG00000115705.22"/>
</dbReference>
<dbReference type="Ensembl" id="ENST00000382198.5">
    <molecule id="P07202-5"/>
    <property type="protein sequence ID" value="ENSP00000371633.1"/>
    <property type="gene ID" value="ENSG00000115705.22"/>
</dbReference>
<dbReference type="Ensembl" id="ENST00000382201.7">
    <molecule id="P07202-2"/>
    <property type="protein sequence ID" value="ENSP00000371636.3"/>
    <property type="gene ID" value="ENSG00000115705.22"/>
</dbReference>
<dbReference type="GeneID" id="7173"/>
<dbReference type="KEGG" id="hsa:7173"/>
<dbReference type="MANE-Select" id="ENST00000329066.9">
    <property type="protein sequence ID" value="ENSP00000329869.4"/>
    <property type="RefSeq nucleotide sequence ID" value="NM_001206744.2"/>
    <property type="RefSeq protein sequence ID" value="NP_001193673.1"/>
</dbReference>
<dbReference type="UCSC" id="uc002qwr.4">
    <molecule id="P07202-1"/>
    <property type="organism name" value="human"/>
</dbReference>
<dbReference type="AGR" id="HGNC:12015"/>
<dbReference type="CTD" id="7173"/>
<dbReference type="DisGeNET" id="7173"/>
<dbReference type="GeneCards" id="TPO"/>
<dbReference type="HGNC" id="HGNC:12015">
    <property type="gene designation" value="TPO"/>
</dbReference>
<dbReference type="HPA" id="ENSG00000115705">
    <property type="expression patterns" value="Tissue enriched (thyroid)"/>
</dbReference>
<dbReference type="MalaCards" id="TPO"/>
<dbReference type="MIM" id="274500">
    <property type="type" value="phenotype"/>
</dbReference>
<dbReference type="MIM" id="606765">
    <property type="type" value="gene"/>
</dbReference>
<dbReference type="neXtProt" id="NX_P07202"/>
<dbReference type="OpenTargets" id="ENSG00000115705"/>
<dbReference type="Orphanet" id="95716">
    <property type="disease" value="Familial thyroid dyshormonogenesis"/>
</dbReference>
<dbReference type="PharmGKB" id="PA36694"/>
<dbReference type="VEuPathDB" id="HostDB:ENSG00000115705"/>
<dbReference type="eggNOG" id="KOG2408">
    <property type="taxonomic scope" value="Eukaryota"/>
</dbReference>
<dbReference type="GeneTree" id="ENSGT00940000158104"/>
<dbReference type="InParanoid" id="P07202"/>
<dbReference type="OMA" id="FMAGDTR"/>
<dbReference type="OrthoDB" id="823504at2759"/>
<dbReference type="PAN-GO" id="P07202">
    <property type="GO annotations" value="2 GO annotations based on evolutionary models"/>
</dbReference>
<dbReference type="PhylomeDB" id="P07202"/>
<dbReference type="TreeFam" id="TF314316"/>
<dbReference type="BRENDA" id="1.11.1.8">
    <property type="organism ID" value="2681"/>
</dbReference>
<dbReference type="BRENDA" id="3.6.1.52">
    <property type="organism ID" value="2681"/>
</dbReference>
<dbReference type="PathwayCommons" id="P07202"/>
<dbReference type="Reactome" id="R-HSA-209968">
    <property type="pathway name" value="Thyroxine biosynthesis"/>
</dbReference>
<dbReference type="SignaLink" id="P07202"/>
<dbReference type="SIGNOR" id="P07202"/>
<dbReference type="UniPathway" id="UPA00194"/>
<dbReference type="BioGRID-ORCS" id="7173">
    <property type="hits" value="8 hits in 1150 CRISPR screens"/>
</dbReference>
<dbReference type="ChiTaRS" id="TPO">
    <property type="organism name" value="human"/>
</dbReference>
<dbReference type="GenomeRNAi" id="7173"/>
<dbReference type="Pharos" id="P07202">
    <property type="development level" value="Tclin"/>
</dbReference>
<dbReference type="PRO" id="PR:P07202"/>
<dbReference type="Proteomes" id="UP000005640">
    <property type="component" value="Chromosome 2"/>
</dbReference>
<dbReference type="RNAct" id="P07202">
    <property type="molecule type" value="protein"/>
</dbReference>
<dbReference type="Bgee" id="ENSG00000115705">
    <property type="expression patterns" value="Expressed in left lobe of thyroid gland and 94 other cell types or tissues"/>
</dbReference>
<dbReference type="ExpressionAtlas" id="P07202">
    <property type="expression patterns" value="baseline and differential"/>
</dbReference>
<dbReference type="GO" id="GO:0009986">
    <property type="term" value="C:cell surface"/>
    <property type="evidence" value="ECO:0007669"/>
    <property type="project" value="UniProtKB-SubCell"/>
</dbReference>
<dbReference type="GO" id="GO:0005615">
    <property type="term" value="C:extracellular space"/>
    <property type="evidence" value="ECO:0007005"/>
    <property type="project" value="UniProtKB"/>
</dbReference>
<dbReference type="GO" id="GO:0005886">
    <property type="term" value="C:plasma membrane"/>
    <property type="evidence" value="ECO:0000304"/>
    <property type="project" value="Reactome"/>
</dbReference>
<dbReference type="GO" id="GO:0005509">
    <property type="term" value="F:calcium ion binding"/>
    <property type="evidence" value="ECO:0007669"/>
    <property type="project" value="InterPro"/>
</dbReference>
<dbReference type="GO" id="GO:0020037">
    <property type="term" value="F:heme binding"/>
    <property type="evidence" value="ECO:0007669"/>
    <property type="project" value="InterPro"/>
</dbReference>
<dbReference type="GO" id="GO:0004447">
    <property type="term" value="F:iodide peroxidase activity"/>
    <property type="evidence" value="ECO:0007669"/>
    <property type="project" value="UniProtKB-EC"/>
</dbReference>
<dbReference type="GO" id="GO:0004601">
    <property type="term" value="F:peroxidase activity"/>
    <property type="evidence" value="ECO:0000318"/>
    <property type="project" value="GO_Central"/>
</dbReference>
<dbReference type="GO" id="GO:0035162">
    <property type="term" value="P:embryonic hemopoiesis"/>
    <property type="evidence" value="ECO:0000314"/>
    <property type="project" value="DFLAT"/>
</dbReference>
<dbReference type="GO" id="GO:0042446">
    <property type="term" value="P:hormone biosynthetic process"/>
    <property type="evidence" value="ECO:0007669"/>
    <property type="project" value="UniProtKB-KW"/>
</dbReference>
<dbReference type="GO" id="GO:0042744">
    <property type="term" value="P:hydrogen peroxide catabolic process"/>
    <property type="evidence" value="ECO:0007669"/>
    <property type="project" value="UniProtKB-KW"/>
</dbReference>
<dbReference type="GO" id="GO:0006979">
    <property type="term" value="P:response to oxidative stress"/>
    <property type="evidence" value="ECO:0007669"/>
    <property type="project" value="InterPro"/>
</dbReference>
<dbReference type="GO" id="GO:0006590">
    <property type="term" value="P:thyroid hormone generation"/>
    <property type="evidence" value="ECO:0000304"/>
    <property type="project" value="Reactome"/>
</dbReference>
<dbReference type="CDD" id="cd00033">
    <property type="entry name" value="CCP"/>
    <property type="match status" value="1"/>
</dbReference>
<dbReference type="CDD" id="cd00054">
    <property type="entry name" value="EGF_CA"/>
    <property type="match status" value="1"/>
</dbReference>
<dbReference type="CDD" id="cd09825">
    <property type="entry name" value="thyroid_peroxidase"/>
    <property type="match status" value="1"/>
</dbReference>
<dbReference type="FunFam" id="1.10.640.10:FF:000010">
    <property type="entry name" value="Thyroid peroxidase"/>
    <property type="match status" value="1"/>
</dbReference>
<dbReference type="FunFam" id="1.10.640.10:FF:000013">
    <property type="entry name" value="Thyroid peroxidase"/>
    <property type="match status" value="1"/>
</dbReference>
<dbReference type="FunFam" id="2.10.70.10:FF:000059">
    <property type="entry name" value="Thyroid peroxidase"/>
    <property type="match status" value="1"/>
</dbReference>
<dbReference type="FunFam" id="2.10.25.10:FF:000452">
    <property type="entry name" value="thyroid peroxidase"/>
    <property type="match status" value="1"/>
</dbReference>
<dbReference type="Gene3D" id="2.10.70.10">
    <property type="entry name" value="Complement Module, domain 1"/>
    <property type="match status" value="1"/>
</dbReference>
<dbReference type="Gene3D" id="1.10.640.10">
    <property type="entry name" value="Haem peroxidase domain superfamily, animal type"/>
    <property type="match status" value="1"/>
</dbReference>
<dbReference type="Gene3D" id="2.10.25.10">
    <property type="entry name" value="Laminin"/>
    <property type="match status" value="1"/>
</dbReference>
<dbReference type="InterPro" id="IPR001881">
    <property type="entry name" value="EGF-like_Ca-bd_dom"/>
</dbReference>
<dbReference type="InterPro" id="IPR000742">
    <property type="entry name" value="EGF-like_dom"/>
</dbReference>
<dbReference type="InterPro" id="IPR000152">
    <property type="entry name" value="EGF-type_Asp/Asn_hydroxyl_site"/>
</dbReference>
<dbReference type="InterPro" id="IPR018097">
    <property type="entry name" value="EGF_Ca-bd_CS"/>
</dbReference>
<dbReference type="InterPro" id="IPR019791">
    <property type="entry name" value="Haem_peroxidase_animal"/>
</dbReference>
<dbReference type="InterPro" id="IPR010255">
    <property type="entry name" value="Haem_peroxidase_sf"/>
</dbReference>
<dbReference type="InterPro" id="IPR037120">
    <property type="entry name" value="Haem_peroxidase_sf_animal"/>
</dbReference>
<dbReference type="InterPro" id="IPR049883">
    <property type="entry name" value="NOTCH1_EGF-like"/>
</dbReference>
<dbReference type="InterPro" id="IPR035976">
    <property type="entry name" value="Sushi/SCR/CCP_sf"/>
</dbReference>
<dbReference type="InterPro" id="IPR000436">
    <property type="entry name" value="Sushi_SCR_CCP_dom"/>
</dbReference>
<dbReference type="InterPro" id="IPR029589">
    <property type="entry name" value="TPO"/>
</dbReference>
<dbReference type="PANTHER" id="PTHR11475">
    <property type="entry name" value="OXIDASE/PEROXIDASE"/>
    <property type="match status" value="1"/>
</dbReference>
<dbReference type="PANTHER" id="PTHR11475:SF60">
    <property type="entry name" value="THYROID PEROXIDASE"/>
    <property type="match status" value="1"/>
</dbReference>
<dbReference type="Pfam" id="PF03098">
    <property type="entry name" value="An_peroxidase"/>
    <property type="match status" value="1"/>
</dbReference>
<dbReference type="Pfam" id="PF07645">
    <property type="entry name" value="EGF_CA"/>
    <property type="match status" value="1"/>
</dbReference>
<dbReference type="Pfam" id="PF00084">
    <property type="entry name" value="Sushi"/>
    <property type="match status" value="1"/>
</dbReference>
<dbReference type="PRINTS" id="PR00457">
    <property type="entry name" value="ANPEROXIDASE"/>
</dbReference>
<dbReference type="SMART" id="SM00032">
    <property type="entry name" value="CCP"/>
    <property type="match status" value="1"/>
</dbReference>
<dbReference type="SMART" id="SM00181">
    <property type="entry name" value="EGF"/>
    <property type="match status" value="1"/>
</dbReference>
<dbReference type="SMART" id="SM00179">
    <property type="entry name" value="EGF_CA"/>
    <property type="match status" value="1"/>
</dbReference>
<dbReference type="SUPFAM" id="SSF57535">
    <property type="entry name" value="Complement control module/SCR domain"/>
    <property type="match status" value="1"/>
</dbReference>
<dbReference type="SUPFAM" id="SSF57196">
    <property type="entry name" value="EGF/Laminin"/>
    <property type="match status" value="1"/>
</dbReference>
<dbReference type="SUPFAM" id="SSF48113">
    <property type="entry name" value="Heme-dependent peroxidases"/>
    <property type="match status" value="1"/>
</dbReference>
<dbReference type="PROSITE" id="PS00010">
    <property type="entry name" value="ASX_HYDROXYL"/>
    <property type="match status" value="1"/>
</dbReference>
<dbReference type="PROSITE" id="PS01186">
    <property type="entry name" value="EGF_2"/>
    <property type="match status" value="1"/>
</dbReference>
<dbReference type="PROSITE" id="PS50026">
    <property type="entry name" value="EGF_3"/>
    <property type="match status" value="1"/>
</dbReference>
<dbReference type="PROSITE" id="PS01187">
    <property type="entry name" value="EGF_CA"/>
    <property type="match status" value="1"/>
</dbReference>
<dbReference type="PROSITE" id="PS00435">
    <property type="entry name" value="PEROXIDASE_1"/>
    <property type="match status" value="1"/>
</dbReference>
<dbReference type="PROSITE" id="PS50292">
    <property type="entry name" value="PEROXIDASE_3"/>
    <property type="match status" value="1"/>
</dbReference>
<dbReference type="PROSITE" id="PS50923">
    <property type="entry name" value="SUSHI"/>
    <property type="match status" value="1"/>
</dbReference>
<keyword id="KW-0025">Alternative splicing</keyword>
<keyword id="KW-0106">Calcium</keyword>
<keyword id="KW-0984">Congenital hypothyroidism</keyword>
<keyword id="KW-0225">Disease variant</keyword>
<keyword id="KW-1015">Disulfide bond</keyword>
<keyword id="KW-0245">EGF-like domain</keyword>
<keyword id="KW-0325">Glycoprotein</keyword>
<keyword id="KW-0349">Heme</keyword>
<keyword id="KW-0376">Hydrogen peroxide</keyword>
<keyword id="KW-0408">Iron</keyword>
<keyword id="KW-0472">Membrane</keyword>
<keyword id="KW-0479">Metal-binding</keyword>
<keyword id="KW-0560">Oxidoreductase</keyword>
<keyword id="KW-0575">Peroxidase</keyword>
<keyword id="KW-1267">Proteomics identification</keyword>
<keyword id="KW-1185">Reference proteome</keyword>
<keyword id="KW-0732">Signal</keyword>
<keyword id="KW-0768">Sushi</keyword>
<keyword id="KW-0893">Thyroid hormones biosynthesis</keyword>
<keyword id="KW-0812">Transmembrane</keyword>
<keyword id="KW-1133">Transmembrane helix</keyword>
<protein>
    <recommendedName>
        <fullName evidence="35">Thyroid peroxidase</fullName>
        <shortName>TPO</shortName>
        <ecNumber evidence="2">1.11.1.8</ecNumber>
    </recommendedName>
</protein>